<keyword id="KW-0030">Aminoacyl-tRNA synthetase</keyword>
<keyword id="KW-0067">ATP-binding</keyword>
<keyword id="KW-0963">Cytoplasm</keyword>
<keyword id="KW-0436">Ligase</keyword>
<keyword id="KW-0547">Nucleotide-binding</keyword>
<keyword id="KW-0648">Protein biosynthesis</keyword>
<sequence>MYNHKVVEKKWQDYWAKHDTFKTGTDPKKKNYYALDMFPFPSGKGLHVGHPEGYTATDIVSRMKRAQGYNVLHPMGWDAFGLPTEQYALKTGEDPAVVTKNNIANFKRQLNKLGFSYDWDREITTSDPNYYKWTQWVFEQMYKKGLAYEAEVPVNWSPDLGTVVANEEVIDGKTERGGYPVYRRNMRQWMLKMTAYADRLLEDLDDLDWPEPVKEMQRNWIGRSVGAQVTFKIKDSDKTFDIFTTRPDTLFGCSYTVLAPENKLVQEITTDGHRDEVNAYIKKIESKSDLERTDLNKDKTGVFTGAYAINPVNGKEVPIWISDYVLASYGTGAVMAVPAHDDRDYAFAKKFDLPINQVLEGGDLSKAAFTEDGPHINSEFLNGLNIKDAKKKMVDWLEEHNCGEKKVNYKLRDWDFSRQRYWGEPIPVIHWEDGTTSLVPEDQLPLRLPHATDIKPSGTPESPLANLTDWVNVVDEMGRKGKRETNTMPNWAGSSWYYLRYVDPHNDKELADYDLLKQWLPVDLYIGGAEHAVRHLLYARFWHKVLYDLGVVPTKEPFQRLYNQGLILKNHEKMSKSKGNVVNPDEVIDEYGADSLRMYEMFMGPLDASIDWDDNGPASTKKFLDRVWRLFVNDLDLKAIPQERIVDKNDGELDKVYAETVKKVTEDFDALHFNTAISQMMVFINAAQKAKTIPREYVEGFVKLLAPVAPHMMEEIWQVFGHDESITYAKWPTYDPAKLVESTVEIMVQVNGKLRGKFEAAKDADRDDVQKQAMALPHVQKFLEGKDVKKVIVVPNKIVNIVAK</sequence>
<dbReference type="EC" id="6.1.1.4" evidence="1"/>
<dbReference type="EMBL" id="CP000517">
    <property type="protein sequence ID" value="ABX27605.1"/>
    <property type="molecule type" value="Genomic_DNA"/>
</dbReference>
<dbReference type="SMR" id="A8YWU4"/>
<dbReference type="KEGG" id="lhe:lhv_1726"/>
<dbReference type="eggNOG" id="COG0495">
    <property type="taxonomic scope" value="Bacteria"/>
</dbReference>
<dbReference type="HOGENOM" id="CLU_004427_0_0_9"/>
<dbReference type="Proteomes" id="UP000000790">
    <property type="component" value="Chromosome"/>
</dbReference>
<dbReference type="GO" id="GO:0005829">
    <property type="term" value="C:cytosol"/>
    <property type="evidence" value="ECO:0007669"/>
    <property type="project" value="TreeGrafter"/>
</dbReference>
<dbReference type="GO" id="GO:0002161">
    <property type="term" value="F:aminoacyl-tRNA deacylase activity"/>
    <property type="evidence" value="ECO:0007669"/>
    <property type="project" value="InterPro"/>
</dbReference>
<dbReference type="GO" id="GO:0005524">
    <property type="term" value="F:ATP binding"/>
    <property type="evidence" value="ECO:0007669"/>
    <property type="project" value="UniProtKB-UniRule"/>
</dbReference>
<dbReference type="GO" id="GO:0004823">
    <property type="term" value="F:leucine-tRNA ligase activity"/>
    <property type="evidence" value="ECO:0007669"/>
    <property type="project" value="UniProtKB-UniRule"/>
</dbReference>
<dbReference type="GO" id="GO:0006429">
    <property type="term" value="P:leucyl-tRNA aminoacylation"/>
    <property type="evidence" value="ECO:0007669"/>
    <property type="project" value="UniProtKB-UniRule"/>
</dbReference>
<dbReference type="CDD" id="cd07958">
    <property type="entry name" value="Anticodon_Ia_Leu_BEm"/>
    <property type="match status" value="1"/>
</dbReference>
<dbReference type="CDD" id="cd00812">
    <property type="entry name" value="LeuRS_core"/>
    <property type="match status" value="1"/>
</dbReference>
<dbReference type="FunFam" id="3.10.20.590:FF:000001">
    <property type="entry name" value="Leucine--tRNA ligase"/>
    <property type="match status" value="1"/>
</dbReference>
<dbReference type="FunFam" id="3.40.50.620:FF:000056">
    <property type="entry name" value="Leucine--tRNA ligase"/>
    <property type="match status" value="1"/>
</dbReference>
<dbReference type="FunFam" id="3.40.50.620:FF:000077">
    <property type="entry name" value="Leucine--tRNA ligase"/>
    <property type="match status" value="1"/>
</dbReference>
<dbReference type="FunFam" id="1.10.730.10:FF:000011">
    <property type="entry name" value="Leucine--tRNA ligase chloroplastic/mitochondrial"/>
    <property type="match status" value="1"/>
</dbReference>
<dbReference type="Gene3D" id="3.10.20.590">
    <property type="match status" value="1"/>
</dbReference>
<dbReference type="Gene3D" id="3.40.50.620">
    <property type="entry name" value="HUPs"/>
    <property type="match status" value="2"/>
</dbReference>
<dbReference type="Gene3D" id="1.10.730.10">
    <property type="entry name" value="Isoleucyl-tRNA Synthetase, Domain 1"/>
    <property type="match status" value="1"/>
</dbReference>
<dbReference type="HAMAP" id="MF_00049_B">
    <property type="entry name" value="Leu_tRNA_synth_B"/>
    <property type="match status" value="1"/>
</dbReference>
<dbReference type="InterPro" id="IPR001412">
    <property type="entry name" value="aa-tRNA-synth_I_CS"/>
</dbReference>
<dbReference type="InterPro" id="IPR002300">
    <property type="entry name" value="aa-tRNA-synth_Ia"/>
</dbReference>
<dbReference type="InterPro" id="IPR002302">
    <property type="entry name" value="Leu-tRNA-ligase"/>
</dbReference>
<dbReference type="InterPro" id="IPR025709">
    <property type="entry name" value="Leu_tRNA-synth_edit"/>
</dbReference>
<dbReference type="InterPro" id="IPR013155">
    <property type="entry name" value="M/V/L/I-tRNA-synth_anticd-bd"/>
</dbReference>
<dbReference type="InterPro" id="IPR015413">
    <property type="entry name" value="Methionyl/Leucyl_tRNA_Synth"/>
</dbReference>
<dbReference type="InterPro" id="IPR014729">
    <property type="entry name" value="Rossmann-like_a/b/a_fold"/>
</dbReference>
<dbReference type="InterPro" id="IPR009080">
    <property type="entry name" value="tRNAsynth_Ia_anticodon-bd"/>
</dbReference>
<dbReference type="InterPro" id="IPR009008">
    <property type="entry name" value="Val/Leu/Ile-tRNA-synth_edit"/>
</dbReference>
<dbReference type="NCBIfam" id="TIGR00396">
    <property type="entry name" value="leuS_bact"/>
    <property type="match status" value="1"/>
</dbReference>
<dbReference type="PANTHER" id="PTHR43740:SF2">
    <property type="entry name" value="LEUCINE--TRNA LIGASE, MITOCHONDRIAL"/>
    <property type="match status" value="1"/>
</dbReference>
<dbReference type="PANTHER" id="PTHR43740">
    <property type="entry name" value="LEUCYL-TRNA SYNTHETASE"/>
    <property type="match status" value="1"/>
</dbReference>
<dbReference type="Pfam" id="PF08264">
    <property type="entry name" value="Anticodon_1"/>
    <property type="match status" value="1"/>
</dbReference>
<dbReference type="Pfam" id="PF00133">
    <property type="entry name" value="tRNA-synt_1"/>
    <property type="match status" value="1"/>
</dbReference>
<dbReference type="Pfam" id="PF13603">
    <property type="entry name" value="tRNA-synt_1_2"/>
    <property type="match status" value="1"/>
</dbReference>
<dbReference type="Pfam" id="PF09334">
    <property type="entry name" value="tRNA-synt_1g"/>
    <property type="match status" value="1"/>
</dbReference>
<dbReference type="PRINTS" id="PR00985">
    <property type="entry name" value="TRNASYNTHLEU"/>
</dbReference>
<dbReference type="SUPFAM" id="SSF47323">
    <property type="entry name" value="Anticodon-binding domain of a subclass of class I aminoacyl-tRNA synthetases"/>
    <property type="match status" value="1"/>
</dbReference>
<dbReference type="SUPFAM" id="SSF52374">
    <property type="entry name" value="Nucleotidylyl transferase"/>
    <property type="match status" value="1"/>
</dbReference>
<dbReference type="SUPFAM" id="SSF50677">
    <property type="entry name" value="ValRS/IleRS/LeuRS editing domain"/>
    <property type="match status" value="1"/>
</dbReference>
<dbReference type="PROSITE" id="PS00178">
    <property type="entry name" value="AA_TRNA_LIGASE_I"/>
    <property type="match status" value="1"/>
</dbReference>
<reference key="1">
    <citation type="journal article" date="2008" name="J. Bacteriol.">
        <title>Genome sequence of Lactobacillus helveticus: an organism distinguished by selective gene loss and IS element expansion.</title>
        <authorList>
            <person name="Callanan M."/>
            <person name="Kaleta P."/>
            <person name="O'Callaghan J."/>
            <person name="O'Sullivan O."/>
            <person name="Jordan K."/>
            <person name="McAuliffe O."/>
            <person name="Sangrador-Vegas A."/>
            <person name="Slattery L."/>
            <person name="Fitzgerald G.F."/>
            <person name="Beresford T."/>
            <person name="Ross R.P."/>
        </authorList>
    </citation>
    <scope>NUCLEOTIDE SEQUENCE [LARGE SCALE GENOMIC DNA]</scope>
    <source>
        <strain>DPC 4571</strain>
    </source>
</reference>
<protein>
    <recommendedName>
        <fullName evidence="1">Leucine--tRNA ligase</fullName>
        <ecNumber evidence="1">6.1.1.4</ecNumber>
    </recommendedName>
    <alternativeName>
        <fullName evidence="1">Leucyl-tRNA synthetase</fullName>
        <shortName evidence="1">LeuRS</shortName>
    </alternativeName>
</protein>
<feature type="chain" id="PRO_1000091328" description="Leucine--tRNA ligase">
    <location>
        <begin position="1"/>
        <end position="804"/>
    </location>
</feature>
<feature type="short sequence motif" description="'HIGH' region">
    <location>
        <begin position="39"/>
        <end position="50"/>
    </location>
</feature>
<feature type="short sequence motif" description="'KMSKS' region">
    <location>
        <begin position="573"/>
        <end position="577"/>
    </location>
</feature>
<feature type="binding site" evidence="1">
    <location>
        <position position="576"/>
    </location>
    <ligand>
        <name>ATP</name>
        <dbReference type="ChEBI" id="CHEBI:30616"/>
    </ligand>
</feature>
<comment type="catalytic activity">
    <reaction evidence="1">
        <text>tRNA(Leu) + L-leucine + ATP = L-leucyl-tRNA(Leu) + AMP + diphosphate</text>
        <dbReference type="Rhea" id="RHEA:11688"/>
        <dbReference type="Rhea" id="RHEA-COMP:9613"/>
        <dbReference type="Rhea" id="RHEA-COMP:9622"/>
        <dbReference type="ChEBI" id="CHEBI:30616"/>
        <dbReference type="ChEBI" id="CHEBI:33019"/>
        <dbReference type="ChEBI" id="CHEBI:57427"/>
        <dbReference type="ChEBI" id="CHEBI:78442"/>
        <dbReference type="ChEBI" id="CHEBI:78494"/>
        <dbReference type="ChEBI" id="CHEBI:456215"/>
        <dbReference type="EC" id="6.1.1.4"/>
    </reaction>
</comment>
<comment type="subcellular location">
    <subcellularLocation>
        <location evidence="1">Cytoplasm</location>
    </subcellularLocation>
</comment>
<comment type="similarity">
    <text evidence="1">Belongs to the class-I aminoacyl-tRNA synthetase family.</text>
</comment>
<gene>
    <name evidence="1" type="primary">leuS</name>
    <name type="ordered locus">lhv_1726</name>
</gene>
<proteinExistence type="inferred from homology"/>
<evidence type="ECO:0000255" key="1">
    <source>
        <dbReference type="HAMAP-Rule" id="MF_00049"/>
    </source>
</evidence>
<organism>
    <name type="scientific">Lactobacillus helveticus (strain DPC 4571)</name>
    <dbReference type="NCBI Taxonomy" id="405566"/>
    <lineage>
        <taxon>Bacteria</taxon>
        <taxon>Bacillati</taxon>
        <taxon>Bacillota</taxon>
        <taxon>Bacilli</taxon>
        <taxon>Lactobacillales</taxon>
        <taxon>Lactobacillaceae</taxon>
        <taxon>Lactobacillus</taxon>
    </lineage>
</organism>
<accession>A8YWU4</accession>
<name>SYL_LACH4</name>